<evidence type="ECO:0000255" key="1">
    <source>
        <dbReference type="HAMAP-Rule" id="MF_00041"/>
    </source>
</evidence>
<sequence>MLKIFNTLTREKEIFKPIHENKVGMYVCGVTVYDLCHIGHGRTFVCFDVIARYLRSLGYDLTYVRNITDVDDKIIKRALENKETCDQLVDRMVQEMYKDFDALNVLRPDFEPRATHHIPEIIEIVEKLIKRGHAYVADNGDVMFDVESFKEYGKLSRQDLEQLQAGARIEINEIKKNPMDFVLWKMSKENEPSWASPWGAGRPGWHIECSAMNCKQLGEHFDIHGGGSDLMFPHHENEIAQSCCAHGGQYVNYWIHSGMIMVDKEKMSKSLGNFFTIRDVLNHYNAEAVRYFLLTAHYRSQLNYSEENLNLAQGALERLYTALRGTDQSAVVFGGENFVETFREAMDDDFNTPNALSVLFEMAREINKLKTEDAEKANGLAARLRELGAILGLLQQDPEKFLQAGSDDDEVAKIEALIKQRNEARAAKDWATADAARNELIAMGIVLEDGPNGTTWRKQ</sequence>
<protein>
    <recommendedName>
        <fullName evidence="1">Cysteine--tRNA ligase</fullName>
        <ecNumber evidence="1">6.1.1.16</ecNumber>
    </recommendedName>
    <alternativeName>
        <fullName evidence="1">Cysteinyl-tRNA synthetase</fullName>
        <shortName evidence="1">CysRS</shortName>
    </alternativeName>
</protein>
<name>SYC_HAEI8</name>
<accession>Q4QPG7</accession>
<comment type="catalytic activity">
    <reaction evidence="1">
        <text>tRNA(Cys) + L-cysteine + ATP = L-cysteinyl-tRNA(Cys) + AMP + diphosphate</text>
        <dbReference type="Rhea" id="RHEA:17773"/>
        <dbReference type="Rhea" id="RHEA-COMP:9661"/>
        <dbReference type="Rhea" id="RHEA-COMP:9679"/>
        <dbReference type="ChEBI" id="CHEBI:30616"/>
        <dbReference type="ChEBI" id="CHEBI:33019"/>
        <dbReference type="ChEBI" id="CHEBI:35235"/>
        <dbReference type="ChEBI" id="CHEBI:78442"/>
        <dbReference type="ChEBI" id="CHEBI:78517"/>
        <dbReference type="ChEBI" id="CHEBI:456215"/>
        <dbReference type="EC" id="6.1.1.16"/>
    </reaction>
</comment>
<comment type="cofactor">
    <cofactor evidence="1">
        <name>Zn(2+)</name>
        <dbReference type="ChEBI" id="CHEBI:29105"/>
    </cofactor>
    <text evidence="1">Binds 1 zinc ion per subunit.</text>
</comment>
<comment type="subunit">
    <text evidence="1">Monomer.</text>
</comment>
<comment type="subcellular location">
    <subcellularLocation>
        <location evidence="1">Cytoplasm</location>
    </subcellularLocation>
</comment>
<comment type="similarity">
    <text evidence="1">Belongs to the class-I aminoacyl-tRNA synthetase family.</text>
</comment>
<gene>
    <name evidence="1" type="primary">cysS</name>
    <name type="ordered locus">NTHI0091</name>
</gene>
<dbReference type="EC" id="6.1.1.16" evidence="1"/>
<dbReference type="EMBL" id="CP000057">
    <property type="protein sequence ID" value="AAX87080.1"/>
    <property type="molecule type" value="Genomic_DNA"/>
</dbReference>
<dbReference type="RefSeq" id="WP_011271818.1">
    <property type="nucleotide sequence ID" value="NC_007146.2"/>
</dbReference>
<dbReference type="SMR" id="Q4QPG7"/>
<dbReference type="GeneID" id="93219002"/>
<dbReference type="KEGG" id="hit:NTHI0091"/>
<dbReference type="HOGENOM" id="CLU_013528_0_1_6"/>
<dbReference type="Proteomes" id="UP000002525">
    <property type="component" value="Chromosome"/>
</dbReference>
<dbReference type="GO" id="GO:0005829">
    <property type="term" value="C:cytosol"/>
    <property type="evidence" value="ECO:0007669"/>
    <property type="project" value="TreeGrafter"/>
</dbReference>
<dbReference type="GO" id="GO:0005524">
    <property type="term" value="F:ATP binding"/>
    <property type="evidence" value="ECO:0007669"/>
    <property type="project" value="UniProtKB-UniRule"/>
</dbReference>
<dbReference type="GO" id="GO:0004817">
    <property type="term" value="F:cysteine-tRNA ligase activity"/>
    <property type="evidence" value="ECO:0007669"/>
    <property type="project" value="UniProtKB-UniRule"/>
</dbReference>
<dbReference type="GO" id="GO:0008270">
    <property type="term" value="F:zinc ion binding"/>
    <property type="evidence" value="ECO:0007669"/>
    <property type="project" value="UniProtKB-UniRule"/>
</dbReference>
<dbReference type="GO" id="GO:0006423">
    <property type="term" value="P:cysteinyl-tRNA aminoacylation"/>
    <property type="evidence" value="ECO:0007669"/>
    <property type="project" value="UniProtKB-UniRule"/>
</dbReference>
<dbReference type="CDD" id="cd07963">
    <property type="entry name" value="Anticodon_Ia_Cys"/>
    <property type="match status" value="1"/>
</dbReference>
<dbReference type="CDD" id="cd00672">
    <property type="entry name" value="CysRS_core"/>
    <property type="match status" value="1"/>
</dbReference>
<dbReference type="FunFam" id="1.20.120.1910:FF:000001">
    <property type="entry name" value="Cysteine--tRNA ligase"/>
    <property type="match status" value="1"/>
</dbReference>
<dbReference type="FunFam" id="3.40.50.620:FF:000009">
    <property type="entry name" value="Cysteine--tRNA ligase"/>
    <property type="match status" value="1"/>
</dbReference>
<dbReference type="Gene3D" id="1.20.120.1910">
    <property type="entry name" value="Cysteine-tRNA ligase, C-terminal anti-codon recognition domain"/>
    <property type="match status" value="1"/>
</dbReference>
<dbReference type="Gene3D" id="3.40.50.620">
    <property type="entry name" value="HUPs"/>
    <property type="match status" value="1"/>
</dbReference>
<dbReference type="HAMAP" id="MF_00041">
    <property type="entry name" value="Cys_tRNA_synth"/>
    <property type="match status" value="1"/>
</dbReference>
<dbReference type="InterPro" id="IPR015803">
    <property type="entry name" value="Cys-tRNA-ligase"/>
</dbReference>
<dbReference type="InterPro" id="IPR015273">
    <property type="entry name" value="Cys-tRNA-synt_Ia_DALR"/>
</dbReference>
<dbReference type="InterPro" id="IPR024909">
    <property type="entry name" value="Cys-tRNA/MSH_ligase"/>
</dbReference>
<dbReference type="InterPro" id="IPR056411">
    <property type="entry name" value="CysS_C"/>
</dbReference>
<dbReference type="InterPro" id="IPR014729">
    <property type="entry name" value="Rossmann-like_a/b/a_fold"/>
</dbReference>
<dbReference type="InterPro" id="IPR032678">
    <property type="entry name" value="tRNA-synt_1_cat_dom"/>
</dbReference>
<dbReference type="InterPro" id="IPR009080">
    <property type="entry name" value="tRNAsynth_Ia_anticodon-bd"/>
</dbReference>
<dbReference type="NCBIfam" id="TIGR00435">
    <property type="entry name" value="cysS"/>
    <property type="match status" value="1"/>
</dbReference>
<dbReference type="PANTHER" id="PTHR10890:SF3">
    <property type="entry name" value="CYSTEINE--TRNA LIGASE, CYTOPLASMIC"/>
    <property type="match status" value="1"/>
</dbReference>
<dbReference type="PANTHER" id="PTHR10890">
    <property type="entry name" value="CYSTEINYL-TRNA SYNTHETASE"/>
    <property type="match status" value="1"/>
</dbReference>
<dbReference type="Pfam" id="PF23493">
    <property type="entry name" value="CysS_C"/>
    <property type="match status" value="1"/>
</dbReference>
<dbReference type="Pfam" id="PF09190">
    <property type="entry name" value="DALR_2"/>
    <property type="match status" value="1"/>
</dbReference>
<dbReference type="Pfam" id="PF01406">
    <property type="entry name" value="tRNA-synt_1e"/>
    <property type="match status" value="1"/>
</dbReference>
<dbReference type="PRINTS" id="PR00983">
    <property type="entry name" value="TRNASYNTHCYS"/>
</dbReference>
<dbReference type="SMART" id="SM00840">
    <property type="entry name" value="DALR_2"/>
    <property type="match status" value="1"/>
</dbReference>
<dbReference type="SUPFAM" id="SSF47323">
    <property type="entry name" value="Anticodon-binding domain of a subclass of class I aminoacyl-tRNA synthetases"/>
    <property type="match status" value="1"/>
</dbReference>
<dbReference type="SUPFAM" id="SSF52374">
    <property type="entry name" value="Nucleotidylyl transferase"/>
    <property type="match status" value="1"/>
</dbReference>
<organism>
    <name type="scientific">Haemophilus influenzae (strain 86-028NP)</name>
    <dbReference type="NCBI Taxonomy" id="281310"/>
    <lineage>
        <taxon>Bacteria</taxon>
        <taxon>Pseudomonadati</taxon>
        <taxon>Pseudomonadota</taxon>
        <taxon>Gammaproteobacteria</taxon>
        <taxon>Pasteurellales</taxon>
        <taxon>Pasteurellaceae</taxon>
        <taxon>Haemophilus</taxon>
    </lineage>
</organism>
<keyword id="KW-0030">Aminoacyl-tRNA synthetase</keyword>
<keyword id="KW-0067">ATP-binding</keyword>
<keyword id="KW-0963">Cytoplasm</keyword>
<keyword id="KW-0436">Ligase</keyword>
<keyword id="KW-0479">Metal-binding</keyword>
<keyword id="KW-0547">Nucleotide-binding</keyword>
<keyword id="KW-0648">Protein biosynthesis</keyword>
<keyword id="KW-0862">Zinc</keyword>
<reference key="1">
    <citation type="journal article" date="2005" name="J. Bacteriol.">
        <title>Genomic sequence of an otitis media isolate of nontypeable Haemophilus influenzae: comparative study with H. influenzae serotype d, strain KW20.</title>
        <authorList>
            <person name="Harrison A."/>
            <person name="Dyer D.W."/>
            <person name="Gillaspy A."/>
            <person name="Ray W.C."/>
            <person name="Mungur R."/>
            <person name="Carson M.B."/>
            <person name="Zhong H."/>
            <person name="Gipson J."/>
            <person name="Gipson M."/>
            <person name="Johnson L.S."/>
            <person name="Lewis L."/>
            <person name="Bakaletz L.O."/>
            <person name="Munson R.S. Jr."/>
        </authorList>
    </citation>
    <scope>NUCLEOTIDE SEQUENCE [LARGE SCALE GENOMIC DNA]</scope>
    <source>
        <strain>86-028NP</strain>
    </source>
</reference>
<proteinExistence type="inferred from homology"/>
<feature type="chain" id="PRO_0000159407" description="Cysteine--tRNA ligase">
    <location>
        <begin position="1"/>
        <end position="459"/>
    </location>
</feature>
<feature type="short sequence motif" description="'HIGH' region">
    <location>
        <begin position="30"/>
        <end position="40"/>
    </location>
</feature>
<feature type="short sequence motif" description="'KMSKS' region">
    <location>
        <begin position="266"/>
        <end position="270"/>
    </location>
</feature>
<feature type="binding site" evidence="1">
    <location>
        <position position="28"/>
    </location>
    <ligand>
        <name>Zn(2+)</name>
        <dbReference type="ChEBI" id="CHEBI:29105"/>
    </ligand>
</feature>
<feature type="binding site" evidence="1">
    <location>
        <position position="209"/>
    </location>
    <ligand>
        <name>Zn(2+)</name>
        <dbReference type="ChEBI" id="CHEBI:29105"/>
    </ligand>
</feature>
<feature type="binding site" evidence="1">
    <location>
        <position position="234"/>
    </location>
    <ligand>
        <name>Zn(2+)</name>
        <dbReference type="ChEBI" id="CHEBI:29105"/>
    </ligand>
</feature>
<feature type="binding site" evidence="1">
    <location>
        <position position="238"/>
    </location>
    <ligand>
        <name>Zn(2+)</name>
        <dbReference type="ChEBI" id="CHEBI:29105"/>
    </ligand>
</feature>
<feature type="binding site" evidence="1">
    <location>
        <position position="269"/>
    </location>
    <ligand>
        <name>ATP</name>
        <dbReference type="ChEBI" id="CHEBI:30616"/>
    </ligand>
</feature>